<proteinExistence type="inferred from homology"/>
<sequence>MAHKKSGGSSSNGRDSESKRLGVKKFGGEKVLAGNILVRQRGTKFYPGSGVGIGKDHTLFALVQGAVGFVTKKHNRTYVTVTPAAQPAE</sequence>
<gene>
    <name evidence="1" type="primary">rpmA</name>
    <name type="ordered locus">CCNA_00320</name>
</gene>
<evidence type="ECO:0000255" key="1">
    <source>
        <dbReference type="HAMAP-Rule" id="MF_00539"/>
    </source>
</evidence>
<evidence type="ECO:0000256" key="2">
    <source>
        <dbReference type="SAM" id="MobiDB-lite"/>
    </source>
</evidence>
<evidence type="ECO:0000305" key="3"/>
<protein>
    <recommendedName>
        <fullName evidence="1">Large ribosomal subunit protein bL27</fullName>
    </recommendedName>
    <alternativeName>
        <fullName evidence="3">50S ribosomal protein L27</fullName>
    </alternativeName>
</protein>
<reference key="1">
    <citation type="journal article" date="2010" name="J. Bacteriol.">
        <title>The genetic basis of laboratory adaptation in Caulobacter crescentus.</title>
        <authorList>
            <person name="Marks M.E."/>
            <person name="Castro-Rojas C.M."/>
            <person name="Teiling C."/>
            <person name="Du L."/>
            <person name="Kapatral V."/>
            <person name="Walunas T.L."/>
            <person name="Crosson S."/>
        </authorList>
    </citation>
    <scope>NUCLEOTIDE SEQUENCE [LARGE SCALE GENOMIC DNA]</scope>
    <source>
        <strain>NA1000 / CB15N</strain>
    </source>
</reference>
<comment type="similarity">
    <text evidence="1">Belongs to the bacterial ribosomal protein bL27 family.</text>
</comment>
<name>RL27_CAUVN</name>
<organism>
    <name type="scientific">Caulobacter vibrioides (strain NA1000 / CB15N)</name>
    <name type="common">Caulobacter crescentus</name>
    <dbReference type="NCBI Taxonomy" id="565050"/>
    <lineage>
        <taxon>Bacteria</taxon>
        <taxon>Pseudomonadati</taxon>
        <taxon>Pseudomonadota</taxon>
        <taxon>Alphaproteobacteria</taxon>
        <taxon>Caulobacterales</taxon>
        <taxon>Caulobacteraceae</taxon>
        <taxon>Caulobacter</taxon>
    </lineage>
</organism>
<keyword id="KW-1185">Reference proteome</keyword>
<keyword id="KW-0687">Ribonucleoprotein</keyword>
<keyword id="KW-0689">Ribosomal protein</keyword>
<feature type="chain" id="PRO_1000146517" description="Large ribosomal subunit protein bL27">
    <location>
        <begin position="1"/>
        <end position="89"/>
    </location>
</feature>
<feature type="region of interest" description="Disordered" evidence="2">
    <location>
        <begin position="1"/>
        <end position="21"/>
    </location>
</feature>
<dbReference type="EMBL" id="CP001340">
    <property type="protein sequence ID" value="ACL93787.1"/>
    <property type="molecule type" value="Genomic_DNA"/>
</dbReference>
<dbReference type="RefSeq" id="WP_010918207.1">
    <property type="nucleotide sequence ID" value="NC_011916.1"/>
</dbReference>
<dbReference type="RefSeq" id="YP_002515695.1">
    <property type="nucleotide sequence ID" value="NC_011916.1"/>
</dbReference>
<dbReference type="SMR" id="B8GYX1"/>
<dbReference type="GeneID" id="7330773"/>
<dbReference type="KEGG" id="ccs:CCNA_00320"/>
<dbReference type="PATRIC" id="fig|565050.3.peg.318"/>
<dbReference type="HOGENOM" id="CLU_095424_4_1_5"/>
<dbReference type="OrthoDB" id="9803474at2"/>
<dbReference type="PhylomeDB" id="B8GYX1"/>
<dbReference type="Proteomes" id="UP000001364">
    <property type="component" value="Chromosome"/>
</dbReference>
<dbReference type="GO" id="GO:0022625">
    <property type="term" value="C:cytosolic large ribosomal subunit"/>
    <property type="evidence" value="ECO:0007669"/>
    <property type="project" value="TreeGrafter"/>
</dbReference>
<dbReference type="GO" id="GO:0003735">
    <property type="term" value="F:structural constituent of ribosome"/>
    <property type="evidence" value="ECO:0007669"/>
    <property type="project" value="InterPro"/>
</dbReference>
<dbReference type="GO" id="GO:0006412">
    <property type="term" value="P:translation"/>
    <property type="evidence" value="ECO:0007669"/>
    <property type="project" value="UniProtKB-UniRule"/>
</dbReference>
<dbReference type="FunFam" id="2.40.50.100:FF:000020">
    <property type="entry name" value="50S ribosomal protein L27"/>
    <property type="match status" value="1"/>
</dbReference>
<dbReference type="Gene3D" id="2.40.50.100">
    <property type="match status" value="1"/>
</dbReference>
<dbReference type="HAMAP" id="MF_00539">
    <property type="entry name" value="Ribosomal_bL27"/>
    <property type="match status" value="1"/>
</dbReference>
<dbReference type="InterPro" id="IPR001684">
    <property type="entry name" value="Ribosomal_bL27"/>
</dbReference>
<dbReference type="InterPro" id="IPR018261">
    <property type="entry name" value="Ribosomal_bL27_CS"/>
</dbReference>
<dbReference type="NCBIfam" id="TIGR00062">
    <property type="entry name" value="L27"/>
    <property type="match status" value="1"/>
</dbReference>
<dbReference type="PANTHER" id="PTHR15893:SF0">
    <property type="entry name" value="LARGE RIBOSOMAL SUBUNIT PROTEIN BL27M"/>
    <property type="match status" value="1"/>
</dbReference>
<dbReference type="PANTHER" id="PTHR15893">
    <property type="entry name" value="RIBOSOMAL PROTEIN L27"/>
    <property type="match status" value="1"/>
</dbReference>
<dbReference type="Pfam" id="PF01016">
    <property type="entry name" value="Ribosomal_L27"/>
    <property type="match status" value="1"/>
</dbReference>
<dbReference type="PRINTS" id="PR00063">
    <property type="entry name" value="RIBOSOMALL27"/>
</dbReference>
<dbReference type="SUPFAM" id="SSF110324">
    <property type="entry name" value="Ribosomal L27 protein-like"/>
    <property type="match status" value="1"/>
</dbReference>
<dbReference type="PROSITE" id="PS00831">
    <property type="entry name" value="RIBOSOMAL_L27"/>
    <property type="match status" value="1"/>
</dbReference>
<accession>B8GYX1</accession>